<sequence length="512" mass="57770">MTVTYTARVAKARFGGFSKLLLLWRGSIYKLLWRELLCFLGLFMALSAAYRFVLTEEQKRYFEKLVLYCDRYASLIPVSFVLGFYVTLVVHRWWNQYLSMPLTDALMCVVVGTVHGHDERGRLYRRTLMRYAGLSGVLILRSVSTAVFKRFPTIDHVVEAGFMTREERKKFENLNSSYNKYWVPCVWFCNLAAQARREGRIRDNGAFKLLLEELNVFRSKCGMLFHYDWISVPLVYTQVVTIAVYSYFLACLIGRQFLDPAQGYKDHDLDLCVPIFTLLQFFFYAGWLKVAEQLINPFGEDDDDFETNFLIDRCFQVSMLAVDEMYDDLAMLEKDLYWDAAEARAPYTAATAFLMQQPSFQGSTFDITLAKEDMQFQRQDGLEAPLNEAHGDFLQRLLPVGTGMGTGGLLGRRVPLLRRKNSHVSEESMAASCACAGAPDGAVPECGCEGPLVDLGQPEPESEPITGPESPALVPAPRAPSEPLTVVPLSGTRGPAPPWLPSPIGEEEESLA</sequence>
<name>BEST2_BOVIN</name>
<proteinExistence type="evidence at protein level"/>
<comment type="function">
    <text evidence="1 2 5 7">Ligand-gated anion channel that allows the movement of anions across cell membranes when activated by calcium (Ca2+) (PubMed:32251414, PubMed:36289327). Transports a large specter of anions, namely mediates the movement of chloride, L-glutamate and iodide (PubMed:32251414, PubMed:36289327). Calcium-binding triggers the dilation of the aperture, but calcium-dependent gating is only effective when the size of the passing anion is bigger than the closed aperture (PubMed:32251414). Mediates the calcium-activated hydrogencarbonate movement and participates in colonic hydrogencarbonate secretion concomitant with mucin secretion (By similarity). In non-pigmented epithelium (NPE), mediates the efflux of intracellular L-glutamate; binding of intracellular L-glutamate activates and open both the neck and the aperture of the channel, leading to L-glutamate exit promoting chloride influx movement from the extracellular side in trans (By similarity). Also exhibits a directional permeability for intracellular glutamine, in a similar manner as for L-glutamate (By similarity).</text>
</comment>
<comment type="catalytic activity">
    <reaction evidence="5 7">
        <text>chloride(in) = chloride(out)</text>
        <dbReference type="Rhea" id="RHEA:29823"/>
        <dbReference type="ChEBI" id="CHEBI:17996"/>
    </reaction>
</comment>
<comment type="catalytic activity">
    <reaction evidence="5">
        <text>iodide(out) = iodide(in)</text>
        <dbReference type="Rhea" id="RHEA:66324"/>
        <dbReference type="ChEBI" id="CHEBI:16382"/>
    </reaction>
</comment>
<comment type="catalytic activity">
    <reaction evidence="2">
        <text>hydrogencarbonate(in) = hydrogencarbonate(out)</text>
        <dbReference type="Rhea" id="RHEA:28695"/>
        <dbReference type="ChEBI" id="CHEBI:17544"/>
    </reaction>
</comment>
<comment type="catalytic activity">
    <reaction evidence="2">
        <text>L-glutamate(out) = L-glutamate(in)</text>
        <dbReference type="Rhea" id="RHEA:66336"/>
        <dbReference type="ChEBI" id="CHEBI:29985"/>
    </reaction>
</comment>
<comment type="catalytic activity">
    <reaction evidence="2">
        <text>L-glutamine(out) = L-glutamine(in)</text>
        <dbReference type="Rhea" id="RHEA:73419"/>
        <dbReference type="ChEBI" id="CHEBI:58359"/>
    </reaction>
</comment>
<comment type="activity regulation">
    <text evidence="2">Chloride channel activity is allosterically inhibited by GLUL/glutamine synthase (GS) which affects the gating at the aperture in the absence of intracellular glutamate. Inhibitory effect of GLUL is relieved upon increasing of intracellular level of L-glutamate.</text>
</comment>
<comment type="subunit">
    <text evidence="5 6 7">Pentamer (PubMed:32251414, PubMed:35789156, PubMed:36289327). Interacts with GLUL; this interaction tethers a fraction of GLUL to the membrane, causing a decrease of cytosolic glutamine synthase (GS) activity and inhibits the chloride channel activity of BEST2 by affecting the gating at the aperture in the absence of intracellular glutamate (PubMed:36289327).</text>
</comment>
<comment type="subcellular location">
    <subcellularLocation>
        <location evidence="5">Cell membrane</location>
        <topology evidence="10 11 12">Multi-pass membrane protein</topology>
    </subcellularLocation>
    <subcellularLocation>
        <location evidence="2">Basolateral cell membrane</location>
        <topology evidence="2">Multi-pass membrane protein</topology>
    </subcellularLocation>
</comment>
<comment type="domain">
    <text evidence="2">The C-terminal auto-inhibitory segment (AS) modulates the open/closed conformation of the channel and determines paralog specificity among bestrophins. In a closed conformation, the C-terminal auto-inhibitory segment constricts the channel concentrically by wrapping around the channel periphery in an inter-protomer manner.</text>
</comment>
<comment type="similarity">
    <text evidence="3">Belongs to the anion channel-forming bestrophin (TC 1.A.46) family. Calcium-sensitive chloride channel subfamily.</text>
</comment>
<evidence type="ECO:0000250" key="1">
    <source>
        <dbReference type="UniProtKB" id="Q8BGM5"/>
    </source>
</evidence>
<evidence type="ECO:0000250" key="2">
    <source>
        <dbReference type="UniProtKB" id="Q8NFU1"/>
    </source>
</evidence>
<evidence type="ECO:0000255" key="3">
    <source>
        <dbReference type="RuleBase" id="RU363126"/>
    </source>
</evidence>
<evidence type="ECO:0000256" key="4">
    <source>
        <dbReference type="SAM" id="MobiDB-lite"/>
    </source>
</evidence>
<evidence type="ECO:0000269" key="5">
    <source>
    </source>
</evidence>
<evidence type="ECO:0000269" key="6">
    <source>
    </source>
</evidence>
<evidence type="ECO:0000269" key="7">
    <source>
    </source>
</evidence>
<evidence type="ECO:0000303" key="8">
    <source>
    </source>
</evidence>
<evidence type="ECO:0000305" key="9"/>
<evidence type="ECO:0000305" key="10">
    <source>
    </source>
</evidence>
<evidence type="ECO:0000305" key="11">
    <source>
    </source>
</evidence>
<evidence type="ECO:0000305" key="12">
    <source>
    </source>
</evidence>
<evidence type="ECO:0007744" key="13">
    <source>
        <dbReference type="PDB" id="6VX5"/>
    </source>
</evidence>
<evidence type="ECO:0007744" key="14">
    <source>
        <dbReference type="PDB" id="6VX6"/>
    </source>
</evidence>
<evidence type="ECO:0007744" key="15">
    <source>
        <dbReference type="PDB" id="6VX7"/>
    </source>
</evidence>
<evidence type="ECO:0007744" key="16">
    <source>
        <dbReference type="PDB" id="6VX8"/>
    </source>
</evidence>
<evidence type="ECO:0007744" key="17">
    <source>
        <dbReference type="PDB" id="6VX9"/>
    </source>
</evidence>
<evidence type="ECO:0007744" key="18">
    <source>
        <dbReference type="PDB" id="8D1N"/>
    </source>
</evidence>
<evidence type="ECO:0007744" key="19">
    <source>
        <dbReference type="PDB" id="8ECY"/>
    </source>
</evidence>
<evidence type="ECO:0007829" key="20">
    <source>
        <dbReference type="PDB" id="6VX5"/>
    </source>
</evidence>
<evidence type="ECO:0007829" key="21">
    <source>
        <dbReference type="PDB" id="6VX7"/>
    </source>
</evidence>
<evidence type="ECO:0007829" key="22">
    <source>
        <dbReference type="PDB" id="6VX9"/>
    </source>
</evidence>
<evidence type="ECO:0007829" key="23">
    <source>
        <dbReference type="PDB" id="8D1N"/>
    </source>
</evidence>
<evidence type="ECO:0007829" key="24">
    <source>
        <dbReference type="PDB" id="8ECY"/>
    </source>
</evidence>
<feature type="chain" id="PRO_0000460225" description="Bestrophin-2">
    <location>
        <begin position="1"/>
        <end position="512"/>
    </location>
</feature>
<feature type="topological domain" description="Cytoplasmic" evidence="9">
    <location>
        <begin position="1"/>
        <end position="31"/>
    </location>
</feature>
<feature type="transmembrane region" description="Helical" evidence="5 6 7 13 14 15 16 17 18 19">
    <location>
        <begin position="32"/>
        <end position="51"/>
    </location>
</feature>
<feature type="topological domain" description="Extracellular" evidence="9">
    <location>
        <begin position="52"/>
        <end position="60"/>
    </location>
</feature>
<feature type="transmembrane region" description="Helical" evidence="5 6 7 13 14 15 16 17 18 19">
    <location>
        <begin position="61"/>
        <end position="82"/>
    </location>
</feature>
<feature type="topological domain" description="Cytoplasmic" evidence="9">
    <location>
        <begin position="83"/>
        <end position="238"/>
    </location>
</feature>
<feature type="transmembrane region" description="Helical" evidence="5 6 7 13 14 15 16 17 18 19">
    <location>
        <begin position="239"/>
        <end position="255"/>
    </location>
</feature>
<feature type="topological domain" description="Extracellular" evidence="9">
    <location>
        <begin position="256"/>
        <end position="274"/>
    </location>
</feature>
<feature type="transmembrane region" description="Helical" evidence="5 6 7 13 14 15 16 17 18 19">
    <location>
        <begin position="275"/>
        <end position="288"/>
    </location>
</feature>
<feature type="topological domain" description="Cytoplasmic" evidence="9">
    <location>
        <begin position="289"/>
        <end position="512"/>
    </location>
</feature>
<feature type="region of interest" description="Disordered" evidence="4">
    <location>
        <begin position="453"/>
        <end position="512"/>
    </location>
</feature>
<feature type="binding site" description="in other chain" evidence="5 6 7 13 14 15 16 17 18 19">
    <location>
        <position position="10"/>
    </location>
    <ligand>
        <name>Ca(2+)</name>
        <dbReference type="ChEBI" id="CHEBI:29108"/>
        <note>ligand shared between two neighboring subunits</note>
    </ligand>
</feature>
<feature type="binding site" evidence="5 6 7 13 14 15 16 17 18 19">
    <location>
        <position position="293"/>
    </location>
    <ligand>
        <name>Ca(2+)</name>
        <dbReference type="ChEBI" id="CHEBI:29108"/>
        <note>ligand shared between two neighboring subunits</note>
    </ligand>
</feature>
<feature type="binding site" evidence="5 6 7 13 14 15 16 17 18 19">
    <location>
        <position position="296"/>
    </location>
    <ligand>
        <name>Ca(2+)</name>
        <dbReference type="ChEBI" id="CHEBI:29108"/>
        <note>ligand shared between two neighboring subunits</note>
    </ligand>
</feature>
<feature type="binding site" evidence="5 6 7 13 14 15 16 17 18 19">
    <location>
        <position position="301"/>
    </location>
    <ligand>
        <name>Ca(2+)</name>
        <dbReference type="ChEBI" id="CHEBI:29108"/>
        <note>ligand shared between two neighboring subunits</note>
    </ligand>
</feature>
<feature type="binding site" evidence="5 6 7 13 14 15 16 17 18 19">
    <location>
        <position position="304"/>
    </location>
    <ligand>
        <name>Ca(2+)</name>
        <dbReference type="ChEBI" id="CHEBI:29108"/>
        <note>ligand shared between two neighboring subunits</note>
    </ligand>
</feature>
<feature type="mutagenesis site" description="Does not affect subcellular location at the cell membrane. Decreases ion selectivity." evidence="5">
    <original>H</original>
    <variation>A</variation>
    <location>
        <position position="91"/>
    </location>
</feature>
<feature type="mutagenesis site" description="Does not affect subcellular location at the cell membrane. Decreases ion selectivity." evidence="5">
    <original>K</original>
    <variation>A</variation>
    <location>
        <position position="265"/>
    </location>
</feature>
<feature type="helix" evidence="23">
    <location>
        <begin position="6"/>
        <end position="9"/>
    </location>
</feature>
<feature type="helix" evidence="23">
    <location>
        <begin position="16"/>
        <end position="22"/>
    </location>
</feature>
<feature type="helix" evidence="23">
    <location>
        <begin position="28"/>
        <end position="52"/>
    </location>
</feature>
<feature type="helix" evidence="23">
    <location>
        <begin position="56"/>
        <end position="72"/>
    </location>
</feature>
<feature type="helix" evidence="23">
    <location>
        <begin position="73"/>
        <end position="75"/>
    </location>
</feature>
<feature type="helix" evidence="23">
    <location>
        <begin position="78"/>
        <end position="98"/>
    </location>
</feature>
<feature type="helix" evidence="23">
    <location>
        <begin position="104"/>
        <end position="113"/>
    </location>
</feature>
<feature type="helix" evidence="23">
    <location>
        <begin position="119"/>
        <end position="143"/>
    </location>
</feature>
<feature type="helix" evidence="23">
    <location>
        <begin position="145"/>
        <end position="150"/>
    </location>
</feature>
<feature type="helix" evidence="23">
    <location>
        <begin position="154"/>
        <end position="159"/>
    </location>
</feature>
<feature type="helix" evidence="23">
    <location>
        <begin position="165"/>
        <end position="173"/>
    </location>
</feature>
<feature type="helix" evidence="23">
    <location>
        <begin position="183"/>
        <end position="197"/>
    </location>
</feature>
<feature type="helix" evidence="23">
    <location>
        <begin position="204"/>
        <end position="229"/>
    </location>
</feature>
<feature type="helix" evidence="23">
    <location>
        <begin position="234"/>
        <end position="254"/>
    </location>
</feature>
<feature type="helix" evidence="23">
    <location>
        <begin position="260"/>
        <end position="262"/>
    </location>
</feature>
<feature type="helix" evidence="23">
    <location>
        <begin position="275"/>
        <end position="295"/>
    </location>
</feature>
<feature type="strand" evidence="23">
    <location>
        <begin position="299"/>
        <end position="301"/>
    </location>
</feature>
<feature type="strand" evidence="20">
    <location>
        <begin position="302"/>
        <end position="304"/>
    </location>
</feature>
<feature type="helix" evidence="23">
    <location>
        <begin position="307"/>
        <end position="323"/>
    </location>
</feature>
<feature type="turn" evidence="22">
    <location>
        <begin position="336"/>
        <end position="339"/>
    </location>
</feature>
<feature type="helix" evidence="24">
    <location>
        <begin position="349"/>
        <end position="352"/>
    </location>
</feature>
<feature type="turn" evidence="21">
    <location>
        <begin position="363"/>
        <end position="366"/>
    </location>
</feature>
<protein>
    <recommendedName>
        <fullName evidence="8">Bestrophin-2</fullName>
    </recommendedName>
</protein>
<reference key="1">
    <citation type="journal article" date="2009" name="Genome Biol.">
        <title>A whole-genome assembly of the domestic cow, Bos taurus.</title>
        <authorList>
            <person name="Zimin A.V."/>
            <person name="Delcher A.L."/>
            <person name="Florea L."/>
            <person name="Kelley D.R."/>
            <person name="Schatz M.C."/>
            <person name="Puiu D."/>
            <person name="Hanrahan F."/>
            <person name="Pertea G."/>
            <person name="Van Tassell C.P."/>
            <person name="Sonstegard T.S."/>
            <person name="Marcais G."/>
            <person name="Roberts M."/>
            <person name="Subramanian P."/>
            <person name="Yorke J.A."/>
            <person name="Salzberg S.L."/>
        </authorList>
    </citation>
    <scope>NUCLEOTIDE SEQUENCE [LARGE SCALE GENOMIC DNA]</scope>
    <source>
        <strain>Hereford</strain>
    </source>
</reference>
<reference evidence="13 14 15 16 17" key="2">
    <citation type="journal article" date="2020" name="Nat. Struct. Mol. Biol.">
        <title>Structural and functional characterization of the bestrophin-2 anion channel.</title>
        <authorList>
            <person name="Owji A.P."/>
            <person name="Zhao Q."/>
            <person name="Ji C."/>
            <person name="Kittredge A."/>
            <person name="Hopiavuori A."/>
            <person name="Fu Z."/>
            <person name="Ward N."/>
            <person name="Clarke O.B."/>
            <person name="Shen Y."/>
            <person name="Zhang Y."/>
            <person name="Hendrickson W.A."/>
            <person name="Yang T."/>
        </authorList>
    </citation>
    <scope>STRUCTURE BY ELECTRON MICROSCOPY (2.17 ANGSTROMS) OF 1-410 IN COMPLEX WITH CLORIDE AND CALCIUM</scope>
    <scope>SUBUNIT</scope>
    <scope>FUNCTION</scope>
    <scope>TRANSPORTER ACTIVITY</scope>
    <scope>MUTAGENESIS OF HIS-91 AND LYS-265</scope>
    <scope>SUBCELLULAR LOCATION</scope>
</reference>
<reference evidence="19" key="3">
    <citation type="journal article" date="2022" name="Nature">
        <title>Bestrophin-2 and glutamine synthetase form a complex for glutamate release.</title>
        <authorList>
            <person name="Owji A.P."/>
            <person name="Yu K."/>
            <person name="Kittredge A."/>
            <person name="Wang J."/>
            <person name="Zhang Y."/>
            <person name="Yang T."/>
        </authorList>
    </citation>
    <scope>STRUCTURE BY ELECTRON MICROSCOPY (2.00 ANGSTROMS) OF 1-410 IN COMPLEX WITH CHLORIDE AND CALCIUM AND GLUL</scope>
    <scope>SUBUNIT</scope>
    <scope>FUNCTION</scope>
    <scope>TRANSPORTER ACTIVITY</scope>
    <scope>TISSUE SPECIFICITY</scope>
</reference>
<reference evidence="18" key="4">
    <citation type="journal article" date="2022" name="Nat. Commun.">
        <title>Structures and gating mechanisms of human bestrophin anion channels.</title>
        <authorList>
            <person name="Owji A.P."/>
            <person name="Wang J."/>
            <person name="Kittredge A."/>
            <person name="Clark Z."/>
            <person name="Zhang Y."/>
            <person name="Hendrickson W.A."/>
            <person name="Yang T."/>
        </authorList>
    </citation>
    <scope>STRUCTURE BY ELECTRON MICROSCOPY (1.93 ANGSTROMS) OF 1-345 IN COMPLEX WITH CHLORIDE AND CALCIUM</scope>
    <scope>SUBUNIT</scope>
</reference>
<accession>E1BF86</accession>
<organism>
    <name type="scientific">Bos taurus</name>
    <name type="common">Bovine</name>
    <dbReference type="NCBI Taxonomy" id="9913"/>
    <lineage>
        <taxon>Eukaryota</taxon>
        <taxon>Metazoa</taxon>
        <taxon>Chordata</taxon>
        <taxon>Craniata</taxon>
        <taxon>Vertebrata</taxon>
        <taxon>Euteleostomi</taxon>
        <taxon>Mammalia</taxon>
        <taxon>Eutheria</taxon>
        <taxon>Laurasiatheria</taxon>
        <taxon>Artiodactyla</taxon>
        <taxon>Ruminantia</taxon>
        <taxon>Pecora</taxon>
        <taxon>Bovidae</taxon>
        <taxon>Bovinae</taxon>
        <taxon>Bos</taxon>
    </lineage>
</organism>
<dbReference type="EMBL" id="NKLS02000007">
    <property type="status" value="NOT_ANNOTATED_CDS"/>
    <property type="molecule type" value="Genomic_DNA"/>
</dbReference>
<dbReference type="RefSeq" id="XP_002688807.1">
    <property type="nucleotide sequence ID" value="XM_002688761.6"/>
</dbReference>
<dbReference type="RefSeq" id="XP_607911.4">
    <property type="nucleotide sequence ID" value="XM_607911.9"/>
</dbReference>
<dbReference type="PDB" id="6VX5">
    <property type="method" value="EM"/>
    <property type="resolution" value="3.03 A"/>
    <property type="chains" value="A/B/C/D/E=1-410"/>
</dbReference>
<dbReference type="PDB" id="6VX6">
    <property type="method" value="EM"/>
    <property type="resolution" value="3.00 A"/>
    <property type="chains" value="A/B/C/D/E=1-410"/>
</dbReference>
<dbReference type="PDB" id="6VX7">
    <property type="method" value="EM"/>
    <property type="resolution" value="2.36 A"/>
    <property type="chains" value="A/B/C/D/E=1-410"/>
</dbReference>
<dbReference type="PDB" id="6VX8">
    <property type="method" value="EM"/>
    <property type="resolution" value="2.33 A"/>
    <property type="chains" value="A/B/C/D/E=1-410"/>
</dbReference>
<dbReference type="PDB" id="6VX9">
    <property type="method" value="EM"/>
    <property type="resolution" value="2.17 A"/>
    <property type="chains" value="A/B/C/D/E=1-410"/>
</dbReference>
<dbReference type="PDB" id="8D1N">
    <property type="method" value="EM"/>
    <property type="resolution" value="1.93 A"/>
    <property type="chains" value="A/B/C/D/E=1-345"/>
</dbReference>
<dbReference type="PDB" id="8ECY">
    <property type="method" value="EM"/>
    <property type="resolution" value="2.00 A"/>
    <property type="chains" value="C/E/G/K/N=1-410"/>
</dbReference>
<dbReference type="PDBsum" id="6VX5"/>
<dbReference type="PDBsum" id="6VX6"/>
<dbReference type="PDBsum" id="6VX7"/>
<dbReference type="PDBsum" id="6VX8"/>
<dbReference type="PDBsum" id="6VX9"/>
<dbReference type="PDBsum" id="8D1N"/>
<dbReference type="PDBsum" id="8ECY"/>
<dbReference type="EMDB" id="EMD-21430"/>
<dbReference type="EMDB" id="EMD-21431"/>
<dbReference type="EMDB" id="EMD-21432"/>
<dbReference type="EMDB" id="EMD-21433"/>
<dbReference type="EMDB" id="EMD-21434"/>
<dbReference type="EMDB" id="EMD-27136"/>
<dbReference type="EMDB" id="EMD-28025"/>
<dbReference type="SMR" id="E1BF86"/>
<dbReference type="FunCoup" id="E1BF86">
    <property type="interactions" value="124"/>
</dbReference>
<dbReference type="STRING" id="9913.ENSBTAP00000003818"/>
<dbReference type="PaxDb" id="9913-ENSBTAP00000003818"/>
<dbReference type="Ensembl" id="ENSBTAT00000003818.7">
    <property type="protein sequence ID" value="ENSBTAP00000003818.5"/>
    <property type="gene ID" value="ENSBTAG00000025652.6"/>
</dbReference>
<dbReference type="GeneID" id="529463"/>
<dbReference type="KEGG" id="bta:529463"/>
<dbReference type="CTD" id="54831"/>
<dbReference type="VEuPathDB" id="HostDB:ENSBTAG00000025652"/>
<dbReference type="VGNC" id="VGNC:26472">
    <property type="gene designation" value="BEST2"/>
</dbReference>
<dbReference type="eggNOG" id="KOG3547">
    <property type="taxonomic scope" value="Eukaryota"/>
</dbReference>
<dbReference type="GeneTree" id="ENSGT00940000161361"/>
<dbReference type="HOGENOM" id="CLU_018069_0_0_1"/>
<dbReference type="InParanoid" id="E1BF86"/>
<dbReference type="OMA" id="APECGCG"/>
<dbReference type="OrthoDB" id="201595at2759"/>
<dbReference type="TreeFam" id="TF315803"/>
<dbReference type="Reactome" id="R-BTA-2672351">
    <property type="pathway name" value="Stimuli-sensing channels"/>
</dbReference>
<dbReference type="Proteomes" id="UP000009136">
    <property type="component" value="Chromosome 7"/>
</dbReference>
<dbReference type="Bgee" id="ENSBTAG00000025652">
    <property type="expression patterns" value="Expressed in rumen papilla and 21 other cell types or tissues"/>
</dbReference>
<dbReference type="GO" id="GO:0016323">
    <property type="term" value="C:basolateral plasma membrane"/>
    <property type="evidence" value="ECO:0000250"/>
    <property type="project" value="UniProtKB"/>
</dbReference>
<dbReference type="GO" id="GO:0034707">
    <property type="term" value="C:chloride channel complex"/>
    <property type="evidence" value="ECO:0007669"/>
    <property type="project" value="UniProtKB-KW"/>
</dbReference>
<dbReference type="GO" id="GO:0005886">
    <property type="term" value="C:plasma membrane"/>
    <property type="evidence" value="ECO:0000314"/>
    <property type="project" value="UniProtKB"/>
</dbReference>
<dbReference type="GO" id="GO:0160133">
    <property type="term" value="F:bicarbonate channel activity"/>
    <property type="evidence" value="ECO:0000250"/>
    <property type="project" value="UniProtKB"/>
</dbReference>
<dbReference type="GO" id="GO:0005254">
    <property type="term" value="F:chloride channel activity"/>
    <property type="evidence" value="ECO:0007669"/>
    <property type="project" value="UniProtKB-KW"/>
</dbReference>
<dbReference type="GO" id="GO:0005217">
    <property type="term" value="F:intracellularly ligand-gated monoatomic ion channel activity"/>
    <property type="evidence" value="ECO:0000250"/>
    <property type="project" value="UniProtKB"/>
</dbReference>
<dbReference type="GO" id="GO:0099095">
    <property type="term" value="F:ligand-gated monoatomic anion channel activity"/>
    <property type="evidence" value="ECO:0000314"/>
    <property type="project" value="UniProtKB"/>
</dbReference>
<dbReference type="GO" id="GO:0099094">
    <property type="term" value="F:ligand-gated monoatomic cation channel activity"/>
    <property type="evidence" value="ECO:0007669"/>
    <property type="project" value="Ensembl"/>
</dbReference>
<dbReference type="GO" id="GO:0015701">
    <property type="term" value="P:bicarbonate transport"/>
    <property type="evidence" value="ECO:0000250"/>
    <property type="project" value="UniProtKB"/>
</dbReference>
<dbReference type="InterPro" id="IPR000615">
    <property type="entry name" value="Bestrophin"/>
</dbReference>
<dbReference type="InterPro" id="IPR021134">
    <property type="entry name" value="Bestrophin-like"/>
</dbReference>
<dbReference type="PANTHER" id="PTHR10736">
    <property type="entry name" value="BESTROPHIN"/>
    <property type="match status" value="1"/>
</dbReference>
<dbReference type="PANTHER" id="PTHR10736:SF1">
    <property type="entry name" value="BESTROPHIN-2"/>
    <property type="match status" value="1"/>
</dbReference>
<dbReference type="Pfam" id="PF01062">
    <property type="entry name" value="Bestrophin"/>
    <property type="match status" value="1"/>
</dbReference>
<keyword id="KW-0002">3D-structure</keyword>
<keyword id="KW-1003">Cell membrane</keyword>
<keyword id="KW-0868">Chloride</keyword>
<keyword id="KW-0869">Chloride channel</keyword>
<keyword id="KW-0407">Ion channel</keyword>
<keyword id="KW-0406">Ion transport</keyword>
<keyword id="KW-0472">Membrane</keyword>
<keyword id="KW-1185">Reference proteome</keyword>
<keyword id="KW-0812">Transmembrane</keyword>
<keyword id="KW-1133">Transmembrane helix</keyword>
<keyword id="KW-0813">Transport</keyword>
<gene>
    <name evidence="2" type="primary">BEST2</name>
</gene>